<gene>
    <name type="primary">BIRC3</name>
</gene>
<reference key="1">
    <citation type="submission" date="2006-11" db="EMBL/GenBank/DDBJ databases">
        <authorList>
            <person name="Wimmershoff J."/>
            <person name="Schade B."/>
            <person name="Rickenbacher A.B."/>
            <person name="Keller S.M."/>
            <person name="Guscetti F."/>
        </authorList>
    </citation>
    <scope>NUCLEOTIDE SEQUENCE [MRNA]</scope>
</reference>
<dbReference type="EC" id="2.3.2.27" evidence="1"/>
<dbReference type="EMBL" id="EF102104">
    <property type="protein sequence ID" value="ABL09004.1"/>
    <property type="molecule type" value="mRNA"/>
</dbReference>
<dbReference type="RefSeq" id="NP_001074194.1">
    <property type="nucleotide sequence ID" value="NM_001080725.1"/>
</dbReference>
<dbReference type="RefSeq" id="XP_005619570.1">
    <property type="nucleotide sequence ID" value="XM_005619513.2"/>
</dbReference>
<dbReference type="RefSeq" id="XP_005619571.1">
    <property type="nucleotide sequence ID" value="XM_005619514.2"/>
</dbReference>
<dbReference type="RefSeq" id="XP_005619572.1">
    <property type="nucleotide sequence ID" value="XM_005619515.2"/>
</dbReference>
<dbReference type="RefSeq" id="XP_038520078.1">
    <property type="nucleotide sequence ID" value="XM_038664150.1"/>
</dbReference>
<dbReference type="RefSeq" id="XP_038520079.1">
    <property type="nucleotide sequence ID" value="XM_038664151.1"/>
</dbReference>
<dbReference type="RefSeq" id="XP_038520080.1">
    <property type="nucleotide sequence ID" value="XM_038664152.1"/>
</dbReference>
<dbReference type="RefSeq" id="XP_038520081.1">
    <property type="nucleotide sequence ID" value="XM_038664153.1"/>
</dbReference>
<dbReference type="RefSeq" id="XP_038520082.1">
    <property type="nucleotide sequence ID" value="XM_038664154.1"/>
</dbReference>
<dbReference type="SMR" id="A1E2V0"/>
<dbReference type="FunCoup" id="A1E2V0">
    <property type="interactions" value="1194"/>
</dbReference>
<dbReference type="STRING" id="9615.ENSCAFP00000050122"/>
<dbReference type="PaxDb" id="9612-ENSCAFP00000022282"/>
<dbReference type="Ensembl" id="ENSCAFT00000107658.1">
    <property type="protein sequence ID" value="ENSCAFP00000071876.1"/>
    <property type="gene ID" value="ENSCAFG00000015105.5"/>
</dbReference>
<dbReference type="Ensembl" id="ENSCAFT00040039339.1">
    <property type="protein sequence ID" value="ENSCAFP00040034318.1"/>
    <property type="gene ID" value="ENSCAFG00040021208.1"/>
</dbReference>
<dbReference type="Ensembl" id="ENSCAFT00040039358.1">
    <property type="protein sequence ID" value="ENSCAFP00040034338.1"/>
    <property type="gene ID" value="ENSCAFG00040021208.1"/>
</dbReference>
<dbReference type="Ensembl" id="ENSCAFT00040039395.1">
    <property type="protein sequence ID" value="ENSCAFP00040034373.1"/>
    <property type="gene ID" value="ENSCAFG00040021208.1"/>
</dbReference>
<dbReference type="Ensembl" id="ENSCAFT00040039446.1">
    <property type="protein sequence ID" value="ENSCAFP00040034420.1"/>
    <property type="gene ID" value="ENSCAFG00040021208.1"/>
</dbReference>
<dbReference type="Ensembl" id="ENSCAFT00040039491.1">
    <property type="protein sequence ID" value="ENSCAFP00040034458.1"/>
    <property type="gene ID" value="ENSCAFG00040021208.1"/>
</dbReference>
<dbReference type="Ensembl" id="ENSCAFT00040039598.1">
    <property type="protein sequence ID" value="ENSCAFP00040034552.1"/>
    <property type="gene ID" value="ENSCAFG00040021208.1"/>
</dbReference>
<dbReference type="Ensembl" id="ENSCAFT00845001898.1">
    <property type="protein sequence ID" value="ENSCAFP00845001493.1"/>
    <property type="gene ID" value="ENSCAFG00845001106.1"/>
</dbReference>
<dbReference type="GeneID" id="489433"/>
<dbReference type="KEGG" id="cfa:489433"/>
<dbReference type="CTD" id="330"/>
<dbReference type="VEuPathDB" id="HostDB:ENSCAFG00845001106"/>
<dbReference type="VGNC" id="VGNC:53305">
    <property type="gene designation" value="BIRC3"/>
</dbReference>
<dbReference type="eggNOG" id="KOG1101">
    <property type="taxonomic scope" value="Eukaryota"/>
</dbReference>
<dbReference type="GeneTree" id="ENSGT00940000154175"/>
<dbReference type="HOGENOM" id="CLU_016347_1_1_1"/>
<dbReference type="InParanoid" id="A1E2V0"/>
<dbReference type="OMA" id="WCKGVIA"/>
<dbReference type="OrthoDB" id="4034597at2759"/>
<dbReference type="TreeFam" id="TF105356"/>
<dbReference type="Reactome" id="R-CFA-168638">
    <property type="pathway name" value="NOD1/2 Signaling Pathway"/>
</dbReference>
<dbReference type="Reactome" id="R-CFA-5357786">
    <property type="pathway name" value="TNFR1-induced proapoptotic signaling"/>
</dbReference>
<dbReference type="Reactome" id="R-CFA-5357905">
    <property type="pathway name" value="Regulation of TNFR1 signaling"/>
</dbReference>
<dbReference type="Reactome" id="R-CFA-5357956">
    <property type="pathway name" value="TNFR1-induced NF-kappa-B signaling pathway"/>
</dbReference>
<dbReference type="Reactome" id="R-CFA-5668541">
    <property type="pathway name" value="TNFR2 non-canonical NF-kB pathway"/>
</dbReference>
<dbReference type="Reactome" id="R-CFA-5675482">
    <property type="pathway name" value="Regulation of necroptotic cell death"/>
</dbReference>
<dbReference type="Reactome" id="R-CFA-5676594">
    <property type="pathway name" value="TNF receptor superfamily (TNFSF) members mediating non-canonical NF-kB pathway"/>
</dbReference>
<dbReference type="Reactome" id="R-CFA-5689880">
    <property type="pathway name" value="Ub-specific processing proteases"/>
</dbReference>
<dbReference type="Reactome" id="R-CFA-937041">
    <property type="pathway name" value="IKK complex recruitment mediated by RIP1"/>
</dbReference>
<dbReference type="Proteomes" id="UP000002254">
    <property type="component" value="Chromosome 5"/>
</dbReference>
<dbReference type="Proteomes" id="UP000694429">
    <property type="component" value="Unplaced"/>
</dbReference>
<dbReference type="Proteomes" id="UP000694542">
    <property type="component" value="Chromosome 5"/>
</dbReference>
<dbReference type="Proteomes" id="UP000805418">
    <property type="component" value="Chromosome 5"/>
</dbReference>
<dbReference type="GO" id="GO:0005737">
    <property type="term" value="C:cytoplasm"/>
    <property type="evidence" value="ECO:0000250"/>
    <property type="project" value="UniProtKB"/>
</dbReference>
<dbReference type="GO" id="GO:0005829">
    <property type="term" value="C:cytosol"/>
    <property type="evidence" value="ECO:0007669"/>
    <property type="project" value="Ensembl"/>
</dbReference>
<dbReference type="GO" id="GO:0005654">
    <property type="term" value="C:nucleoplasm"/>
    <property type="evidence" value="ECO:0007669"/>
    <property type="project" value="Ensembl"/>
</dbReference>
<dbReference type="GO" id="GO:0005634">
    <property type="term" value="C:nucleus"/>
    <property type="evidence" value="ECO:0000250"/>
    <property type="project" value="UniProtKB"/>
</dbReference>
<dbReference type="GO" id="GO:0043027">
    <property type="term" value="F:cysteine-type endopeptidase inhibitor activity involved in apoptotic process"/>
    <property type="evidence" value="ECO:0000318"/>
    <property type="project" value="GO_Central"/>
</dbReference>
<dbReference type="GO" id="GO:0061630">
    <property type="term" value="F:ubiquitin protein ligase activity"/>
    <property type="evidence" value="ECO:0000318"/>
    <property type="project" value="GO_Central"/>
</dbReference>
<dbReference type="GO" id="GO:0008270">
    <property type="term" value="F:zinc ion binding"/>
    <property type="evidence" value="ECO:0007669"/>
    <property type="project" value="UniProtKB-KW"/>
</dbReference>
<dbReference type="GO" id="GO:0006915">
    <property type="term" value="P:apoptotic process"/>
    <property type="evidence" value="ECO:0007669"/>
    <property type="project" value="UniProtKB-KW"/>
</dbReference>
<dbReference type="GO" id="GO:0043066">
    <property type="term" value="P:negative regulation of apoptotic process"/>
    <property type="evidence" value="ECO:0000318"/>
    <property type="project" value="GO_Central"/>
</dbReference>
<dbReference type="GO" id="GO:0060546">
    <property type="term" value="P:negative regulation of necroptotic process"/>
    <property type="evidence" value="ECO:0000318"/>
    <property type="project" value="GO_Central"/>
</dbReference>
<dbReference type="GO" id="GO:0031398">
    <property type="term" value="P:positive regulation of protein ubiquitination"/>
    <property type="evidence" value="ECO:0000318"/>
    <property type="project" value="GO_Central"/>
</dbReference>
<dbReference type="GO" id="GO:0051726">
    <property type="term" value="P:regulation of cell cycle"/>
    <property type="evidence" value="ECO:0000318"/>
    <property type="project" value="GO_Central"/>
</dbReference>
<dbReference type="CDD" id="cd00022">
    <property type="entry name" value="BIR"/>
    <property type="match status" value="3"/>
</dbReference>
<dbReference type="CDD" id="cd16713">
    <property type="entry name" value="RING-HC_BIRC2_3_7"/>
    <property type="match status" value="1"/>
</dbReference>
<dbReference type="CDD" id="cd14394">
    <property type="entry name" value="UBA_BIRC2_3"/>
    <property type="match status" value="1"/>
</dbReference>
<dbReference type="FunFam" id="1.10.1170.10:FF:000005">
    <property type="entry name" value="Baculoviral IAP repeat containing 2"/>
    <property type="match status" value="1"/>
</dbReference>
<dbReference type="FunFam" id="1.10.1170.10:FF:000010">
    <property type="entry name" value="Baculoviral IAP repeat containing 2"/>
    <property type="match status" value="1"/>
</dbReference>
<dbReference type="FunFam" id="3.30.40.10:FF:000184">
    <property type="entry name" value="Baculoviral IAP repeat containing 2"/>
    <property type="match status" value="1"/>
</dbReference>
<dbReference type="FunFam" id="1.10.1170.10:FF:000002">
    <property type="entry name" value="Baculoviral IAP repeat containing 7"/>
    <property type="match status" value="1"/>
</dbReference>
<dbReference type="FunFam" id="1.10.8.10:FF:000035">
    <property type="entry name" value="baculoviral IAP repeat-containing protein 2"/>
    <property type="match status" value="1"/>
</dbReference>
<dbReference type="Gene3D" id="1.10.533.10">
    <property type="entry name" value="Death Domain, Fas"/>
    <property type="match status" value="1"/>
</dbReference>
<dbReference type="Gene3D" id="1.10.8.10">
    <property type="entry name" value="DNA helicase RuvA subunit, C-terminal domain"/>
    <property type="match status" value="1"/>
</dbReference>
<dbReference type="Gene3D" id="1.10.1170.10">
    <property type="entry name" value="Inhibitor Of Apoptosis Protein (2mihbC-IAP-1), Chain A"/>
    <property type="match status" value="3"/>
</dbReference>
<dbReference type="InterPro" id="IPR001370">
    <property type="entry name" value="BIR_rpt"/>
</dbReference>
<dbReference type="InterPro" id="IPR048875">
    <property type="entry name" value="BIRC2-3-like_UBA"/>
</dbReference>
<dbReference type="InterPro" id="IPR041933">
    <property type="entry name" value="BIRC2/BIRC3_UBA"/>
</dbReference>
<dbReference type="InterPro" id="IPR001315">
    <property type="entry name" value="CARD"/>
</dbReference>
<dbReference type="InterPro" id="IPR011029">
    <property type="entry name" value="DEATH-like_dom_sf"/>
</dbReference>
<dbReference type="InterPro" id="IPR050784">
    <property type="entry name" value="IAP"/>
</dbReference>
<dbReference type="InterPro" id="IPR001841">
    <property type="entry name" value="Znf_RING"/>
</dbReference>
<dbReference type="PANTHER" id="PTHR10044:SF178">
    <property type="entry name" value="BACULOVIRAL IAP REPEAT-CONTAINING PROTEIN 3"/>
    <property type="match status" value="1"/>
</dbReference>
<dbReference type="PANTHER" id="PTHR10044">
    <property type="entry name" value="INHIBITOR OF APOPTOSIS"/>
    <property type="match status" value="1"/>
</dbReference>
<dbReference type="Pfam" id="PF00653">
    <property type="entry name" value="BIR"/>
    <property type="match status" value="3"/>
</dbReference>
<dbReference type="Pfam" id="PF00619">
    <property type="entry name" value="CARD"/>
    <property type="match status" value="1"/>
</dbReference>
<dbReference type="Pfam" id="PF21290">
    <property type="entry name" value="UBA_BIRC2-3"/>
    <property type="match status" value="1"/>
</dbReference>
<dbReference type="Pfam" id="PF13920">
    <property type="entry name" value="zf-C3HC4_3"/>
    <property type="match status" value="1"/>
</dbReference>
<dbReference type="SMART" id="SM00238">
    <property type="entry name" value="BIR"/>
    <property type="match status" value="3"/>
</dbReference>
<dbReference type="SMART" id="SM00114">
    <property type="entry name" value="CARD"/>
    <property type="match status" value="1"/>
</dbReference>
<dbReference type="SMART" id="SM00184">
    <property type="entry name" value="RING"/>
    <property type="match status" value="1"/>
</dbReference>
<dbReference type="SUPFAM" id="SSF47986">
    <property type="entry name" value="DEATH domain"/>
    <property type="match status" value="1"/>
</dbReference>
<dbReference type="SUPFAM" id="SSF57924">
    <property type="entry name" value="Inhibitor of apoptosis (IAP) repeat"/>
    <property type="match status" value="3"/>
</dbReference>
<dbReference type="PROSITE" id="PS01282">
    <property type="entry name" value="BIR_REPEAT_1"/>
    <property type="match status" value="3"/>
</dbReference>
<dbReference type="PROSITE" id="PS50143">
    <property type="entry name" value="BIR_REPEAT_2"/>
    <property type="match status" value="3"/>
</dbReference>
<dbReference type="PROSITE" id="PS50209">
    <property type="entry name" value="CARD"/>
    <property type="match status" value="1"/>
</dbReference>
<dbReference type="PROSITE" id="PS50089">
    <property type="entry name" value="ZF_RING_2"/>
    <property type="match status" value="1"/>
</dbReference>
<sequence length="604" mass="67940">MNIVQNSIFLSNLLRSSPVFELKYDHSCELYRMSTYSTFPAGVPVSERSLARAGFYYTGAKDRVRCFCCGLMLDNWKAGDSPTGKHRNLYPSCSFIQNLSAVSTVGAASQPPAPLSEARSTHAQSPGLERSSYFSASYSSFPVDPVDFRPSPAMSPWRAGPSCVTMKSEEDRLCTFQGWPLAFPLPSALARAGFYYVGPGDRVACFACGGKLSNWEPDDDALSEHLRHFPDCPFVEGQLQATVRYTASNLSMQTLAARSRTFCNWPPRAPVHPEQLASAGFYYMGHSDDVKCFCCDGGLRCWESGDDPWVEHAKWFPRCEYLIRIKGQEFISQIQASYPHLLEQLLSTSDNTEDENTESPIVHFGPGEYHSEDAVMMNTPVVMAALEMGFSRSLVRQTVQSKILSTGENYRTVNEIVSDLLHVEDEIREEEKERAAENRESDDVSLIRKNKMVLFQHLTYVLPILDSLLMAGVLNEQEHSSIKQKARTSLQARELIDTVLVKGSSAVTIFKNSLQEIDPMLYKRFFVQQDRKYIPTEDISDLPVEEQLRRLQEERTCKVCMDKEVSIVFIPCGHLVVCRDCAPSLRKCPICRGTVRGTVRTFLS</sequence>
<proteinExistence type="evidence at transcript level"/>
<feature type="chain" id="PRO_0000289583" description="Baculoviral IAP repeat-containing protein 3">
    <location>
        <begin position="1"/>
        <end position="604"/>
    </location>
</feature>
<feature type="repeat" description="BIR 1">
    <location>
        <begin position="29"/>
        <end position="96"/>
    </location>
</feature>
<feature type="repeat" description="BIR 2">
    <location>
        <begin position="169"/>
        <end position="235"/>
    </location>
</feature>
<feature type="repeat" description="BIR 3">
    <location>
        <begin position="255"/>
        <end position="322"/>
    </location>
</feature>
<feature type="domain" description="CARD" evidence="4">
    <location>
        <begin position="439"/>
        <end position="529"/>
    </location>
</feature>
<feature type="zinc finger region" description="RING-type" evidence="5">
    <location>
        <begin position="557"/>
        <end position="592"/>
    </location>
</feature>
<feature type="binding site" evidence="3">
    <location>
        <position position="292"/>
    </location>
    <ligand>
        <name>Zn(2+)</name>
        <dbReference type="ChEBI" id="CHEBI:29105"/>
    </ligand>
</feature>
<feature type="binding site" evidence="3">
    <location>
        <position position="295"/>
    </location>
    <ligand>
        <name>Zn(2+)</name>
        <dbReference type="ChEBI" id="CHEBI:29105"/>
    </ligand>
</feature>
<feature type="binding site" evidence="3">
    <location>
        <position position="312"/>
    </location>
    <ligand>
        <name>Zn(2+)</name>
        <dbReference type="ChEBI" id="CHEBI:29105"/>
    </ligand>
</feature>
<feature type="binding site" evidence="3">
    <location>
        <position position="319"/>
    </location>
    <ligand>
        <name>Zn(2+)</name>
        <dbReference type="ChEBI" id="CHEBI:29105"/>
    </ligand>
</feature>
<feature type="modified residue" description="Omega-N-methylarginine" evidence="2">
    <location>
        <position position="130"/>
    </location>
</feature>
<feature type="modified residue" description="Phosphoserine" evidence="2">
    <location>
        <position position="140"/>
    </location>
</feature>
<comment type="function">
    <text evidence="1">Multi-functional protein which regulates not only caspases and apoptosis, but also modulates inflammatory signaling and immunity, mitogenic kinase signaling and cell proliferation, as well as cell invasion and metastasis. Acts as an E3 ubiquitin-protein ligase regulating NF-kappa-B signaling and regulates both canonical and non-canonical NF-kappa-B signaling by acting in opposite directions: acts as a positive regulator of the canonical pathway and suppresses constitutive activation of non-canonical NF-kappa-B signaling. The target proteins for its E3 ubiquitin-protein ligase activity include: RIPK1, RIPK2, RIPK3, RIPK4, CASP3, CASP7, CASP8, IKBKE, TRAF1, and BCL10. Acts as an important regulator of innate immune signaling via regulation of Toll-like receptors (TLRs), Nodlike receptors (NLRs) and RIG-I like receptors (RLRs), collectively referred to as pattern recognition receptors (PRRs). Protects cells from spontaneous formation of the ripoptosome, a large multi-protein complex that has the capability to kill cancer cells in a caspase-dependent and caspase-independent manner. Suppresses ripoptosome formation by ubiquitinating RIPK1 and CASP8.</text>
</comment>
<comment type="catalytic activity">
    <reaction evidence="1">
        <text>S-ubiquitinyl-[E2 ubiquitin-conjugating enzyme]-L-cysteine + [acceptor protein]-L-lysine = [E2 ubiquitin-conjugating enzyme]-L-cysteine + N(6)-ubiquitinyl-[acceptor protein]-L-lysine.</text>
        <dbReference type="EC" id="2.3.2.27"/>
    </reaction>
</comment>
<comment type="activity regulation">
    <text evidence="1">USP19 regulates the stability of BIRC3/c-IAP2 by preventing its ubiquitination.</text>
</comment>
<comment type="subunit">
    <text evidence="1">Interacts with PRSS25; the interaction inhibits apoptotic suppressor activity. The BIR motifs region interacts with TNF receptor associated factors 1 and 2 (TRAF1 and TRAF2) to form a heteromeric complex, which is then recruited to the tumor necrosis factor receptor 2 (TNFR2). Interaction with TRAF2 is required for ubiquitination of IKBKE, degradation of NFKBIA and activation of NF-kappa-B. Interacts with RIP1, RIP2, RIP3, RIP4 and USP19.</text>
</comment>
<comment type="subcellular location">
    <subcellularLocation>
        <location evidence="1">Cytoplasm</location>
    </subcellularLocation>
    <subcellularLocation>
        <location evidence="1">Nucleus</location>
    </subcellularLocation>
</comment>
<comment type="PTM">
    <text evidence="1">Auto-ubiquitinated and degraded by the proteasome in apoptotic cells.</text>
</comment>
<comment type="similarity">
    <text evidence="6">Belongs to the IAP family.</text>
</comment>
<evidence type="ECO:0000250" key="1">
    <source>
        <dbReference type="UniProtKB" id="Q13489"/>
    </source>
</evidence>
<evidence type="ECO:0000250" key="2">
    <source>
        <dbReference type="UniProtKB" id="Q62210"/>
    </source>
</evidence>
<evidence type="ECO:0000255" key="3">
    <source>
        <dbReference type="PROSITE-ProRule" id="PRU00029"/>
    </source>
</evidence>
<evidence type="ECO:0000255" key="4">
    <source>
        <dbReference type="PROSITE-ProRule" id="PRU00046"/>
    </source>
</evidence>
<evidence type="ECO:0000255" key="5">
    <source>
        <dbReference type="PROSITE-ProRule" id="PRU00175"/>
    </source>
</evidence>
<evidence type="ECO:0000305" key="6"/>
<name>BIRC3_CANLF</name>
<protein>
    <recommendedName>
        <fullName>Baculoviral IAP repeat-containing protein 3</fullName>
        <ecNumber evidence="1">2.3.2.27</ecNumber>
    </recommendedName>
    <alternativeName>
        <fullName evidence="6">RING-type E3 ubiquitin transferase BIRC3</fullName>
    </alternativeName>
</protein>
<keyword id="KW-0053">Apoptosis</keyword>
<keyword id="KW-0963">Cytoplasm</keyword>
<keyword id="KW-0479">Metal-binding</keyword>
<keyword id="KW-0488">Methylation</keyword>
<keyword id="KW-0539">Nucleus</keyword>
<keyword id="KW-0597">Phosphoprotein</keyword>
<keyword id="KW-1185">Reference proteome</keyword>
<keyword id="KW-0677">Repeat</keyword>
<keyword id="KW-0808">Transferase</keyword>
<keyword id="KW-0832">Ubl conjugation</keyword>
<keyword id="KW-0833">Ubl conjugation pathway</keyword>
<keyword id="KW-0862">Zinc</keyword>
<keyword id="KW-0863">Zinc-finger</keyword>
<accession>A1E2V0</accession>
<organism>
    <name type="scientific">Canis lupus familiaris</name>
    <name type="common">Dog</name>
    <name type="synonym">Canis familiaris</name>
    <dbReference type="NCBI Taxonomy" id="9615"/>
    <lineage>
        <taxon>Eukaryota</taxon>
        <taxon>Metazoa</taxon>
        <taxon>Chordata</taxon>
        <taxon>Craniata</taxon>
        <taxon>Vertebrata</taxon>
        <taxon>Euteleostomi</taxon>
        <taxon>Mammalia</taxon>
        <taxon>Eutheria</taxon>
        <taxon>Laurasiatheria</taxon>
        <taxon>Carnivora</taxon>
        <taxon>Caniformia</taxon>
        <taxon>Canidae</taxon>
        <taxon>Canis</taxon>
    </lineage>
</organism>